<sequence length="165" mass="18121">MSGLLTRWRQFGRRYFWPHLLLGMVAASLGLPALSNGHETAAPAKATASNHNPSKVNFSQLALLETNRRPSFTVDYWHQHAIRTVIRHLSFAMAPQALPVAEETSPLQAQHLALLDTLSALLTQDSTPPVVIRQAGYIPSSYSAFRVSAWISQVAGIRAGPQRLS</sequence>
<protein>
    <recommendedName>
        <fullName evidence="1">Secretion monitor</fullName>
    </recommendedName>
</protein>
<keyword id="KW-0963">Cytoplasm</keyword>
<keyword id="KW-0574">Periplasm</keyword>
<keyword id="KW-0732">Signal</keyword>
<dbReference type="EMBL" id="CP000647">
    <property type="protein sequence ID" value="ABR75561.1"/>
    <property type="status" value="ALT_INIT"/>
    <property type="molecule type" value="Genomic_DNA"/>
</dbReference>
<dbReference type="SMR" id="A6T4P0"/>
<dbReference type="STRING" id="272620.KPN_00101"/>
<dbReference type="PaxDb" id="272620-KPN_00101"/>
<dbReference type="EnsemblBacteria" id="ABR75561">
    <property type="protein sequence ID" value="ABR75561"/>
    <property type="gene ID" value="KPN_00101"/>
</dbReference>
<dbReference type="KEGG" id="kpn:KPN_00101"/>
<dbReference type="HOGENOM" id="CLU_108853_0_0_6"/>
<dbReference type="Proteomes" id="UP000000265">
    <property type="component" value="Chromosome"/>
</dbReference>
<dbReference type="GO" id="GO:0005829">
    <property type="term" value="C:cytosol"/>
    <property type="evidence" value="ECO:0007669"/>
    <property type="project" value="UniProtKB-SubCell"/>
</dbReference>
<dbReference type="GO" id="GO:0042597">
    <property type="term" value="C:periplasmic space"/>
    <property type="evidence" value="ECO:0007669"/>
    <property type="project" value="UniProtKB-SubCell"/>
</dbReference>
<dbReference type="GO" id="GO:0045182">
    <property type="term" value="F:translation regulator activity"/>
    <property type="evidence" value="ECO:0007669"/>
    <property type="project" value="InterPro"/>
</dbReference>
<dbReference type="HAMAP" id="MF_01332">
    <property type="entry name" value="SecM"/>
    <property type="match status" value="1"/>
</dbReference>
<dbReference type="InterPro" id="IPR009502">
    <property type="entry name" value="SecM"/>
</dbReference>
<dbReference type="NCBIfam" id="NF002799">
    <property type="entry name" value="PRK02943.1-1"/>
    <property type="match status" value="1"/>
</dbReference>
<dbReference type="Pfam" id="PF06558">
    <property type="entry name" value="SecM"/>
    <property type="match status" value="1"/>
</dbReference>
<dbReference type="PIRSF" id="PIRSF004572">
    <property type="entry name" value="SecM"/>
    <property type="match status" value="1"/>
</dbReference>
<name>SECM_KLEP7</name>
<accession>A6T4P0</accession>
<comment type="function">
    <text evidence="1">Regulates secA expression by translational coupling of the secM secA operon. Translational pausing at a specific Pro residue 5 residues before the end of the protein may allow disruption of a mRNA repressor helix that normally suppresses secA translation initiation.</text>
</comment>
<comment type="subcellular location">
    <subcellularLocation>
        <location evidence="1">Cytoplasm</location>
        <location evidence="1">Cytosol</location>
    </subcellularLocation>
    <subcellularLocation>
        <location evidence="1">Periplasm</location>
    </subcellularLocation>
    <text evidence="1">The active form is cytosolic, while the periplasmic form is rapidly degraded, mainly by the tail-specific protease.</text>
</comment>
<comment type="similarity">
    <text evidence="1">Belongs to the SecM family.</text>
</comment>
<comment type="sequence caution" evidence="2">
    <conflict type="erroneous initiation">
        <sequence resource="EMBL-CDS" id="ABR75561"/>
    </conflict>
</comment>
<organism>
    <name type="scientific">Klebsiella pneumoniae subsp. pneumoniae (strain ATCC 700721 / MGH 78578)</name>
    <dbReference type="NCBI Taxonomy" id="272620"/>
    <lineage>
        <taxon>Bacteria</taxon>
        <taxon>Pseudomonadati</taxon>
        <taxon>Pseudomonadota</taxon>
        <taxon>Gammaproteobacteria</taxon>
        <taxon>Enterobacterales</taxon>
        <taxon>Enterobacteriaceae</taxon>
        <taxon>Klebsiella/Raoultella group</taxon>
        <taxon>Klebsiella</taxon>
        <taxon>Klebsiella pneumoniae complex</taxon>
    </lineage>
</organism>
<feature type="signal peptide" evidence="1">
    <location>
        <begin position="1"/>
        <end position="37"/>
    </location>
</feature>
<feature type="chain" id="PRO_0000314447" description="Secretion monitor">
    <location>
        <begin position="38"/>
        <end position="165"/>
    </location>
</feature>
<evidence type="ECO:0000255" key="1">
    <source>
        <dbReference type="HAMAP-Rule" id="MF_01332"/>
    </source>
</evidence>
<evidence type="ECO:0000305" key="2"/>
<reference key="1">
    <citation type="submission" date="2006-09" db="EMBL/GenBank/DDBJ databases">
        <authorList>
            <consortium name="The Klebsiella pneumonia Genome Sequencing Project"/>
            <person name="McClelland M."/>
            <person name="Sanderson E.K."/>
            <person name="Spieth J."/>
            <person name="Clifton W.S."/>
            <person name="Latreille P."/>
            <person name="Sabo A."/>
            <person name="Pepin K."/>
            <person name="Bhonagiri V."/>
            <person name="Porwollik S."/>
            <person name="Ali J."/>
            <person name="Wilson R.K."/>
        </authorList>
    </citation>
    <scope>NUCLEOTIDE SEQUENCE [LARGE SCALE GENOMIC DNA]</scope>
    <source>
        <strain>ATCC 700721 / MGH 78578</strain>
    </source>
</reference>
<gene>
    <name evidence="1" type="primary">secM</name>
    <name type="ordered locus">KPN78578_01000</name>
    <name type="ORF">KPN_00101</name>
</gene>
<proteinExistence type="inferred from homology"/>